<comment type="function">
    <text evidence="1">Structural component of the T=16 icosahedral capsid. The capsid is composed of pentamers and hexamers of major capsid protein/MCP, which are linked together by heterotrimers called triplexes. These triplexes are formed by a single molecule of triplex protein 1/TRX1 and two copies of triplex protein 2/TRX2. Additionally, TRX1 is required for efficient transport of TRX2 to the nucleus, which is the site of capsid assembly.</text>
</comment>
<comment type="subunit">
    <text evidence="1">Interacts with TRX1 and major capisd protein/MCP.</text>
</comment>
<comment type="subcellular location">
    <subcellularLocation>
        <location evidence="1">Virion</location>
    </subcellularLocation>
    <subcellularLocation>
        <location evidence="1">Host nucleus</location>
    </subcellularLocation>
</comment>
<comment type="similarity">
    <text evidence="1">Belongs to the herpesviridae TRX2 protein family.</text>
</comment>
<accession>Q9E6P9</accession>
<keyword id="KW-0167">Capsid protein</keyword>
<keyword id="KW-1048">Host nucleus</keyword>
<keyword id="KW-1185">Reference proteome</keyword>
<keyword id="KW-0946">Virion</keyword>
<sequence length="319" mass="34865">MSTSNGTIVEIELPCKLSTCDANLLQRCEGRVLFLPFVRARVLLKDVDYKSFYIAGTEPDTLSLLSTFKTRFAAVITRALPGRMSAVVLGMGSIPNGLALQNTGPFDLCNGDTVCLMPPIFPNVCCRIRLESIDTELLFPVTVPTRLANEILAKTLSRAIEAIGRGQMPPPTSRESETIMYNGRSYTISPTLHSLDAAESTVRTLLLNMIFAINEGNMILYTMIPTLLTLGASDGYINALVGLETATRAVGQLIRIPNPPPLQDAWRRYPVYEALSAWITMTLNLGNVLSLHPLLKVCTFDGPANIKAGDLCPVIANWY</sequence>
<protein>
    <recommendedName>
        <fullName evidence="1">Triplex capsid protein 2</fullName>
    </recommendedName>
</protein>
<gene>
    <name evidence="1" type="primary">TRX2</name>
    <name type="ordered locus">MDV030</name>
</gene>
<dbReference type="EMBL" id="AF243438">
    <property type="protein sequence ID" value="AAG14210.1"/>
    <property type="molecule type" value="Genomic_DNA"/>
</dbReference>
<dbReference type="RefSeq" id="YP_001033946.1">
    <property type="nucleotide sequence ID" value="NC_002229.3"/>
</dbReference>
<dbReference type="SMR" id="Q9E6P9"/>
<dbReference type="GeneID" id="4811491"/>
<dbReference type="KEGG" id="vg:4811491"/>
<dbReference type="Proteomes" id="UP000008072">
    <property type="component" value="Segment"/>
</dbReference>
<dbReference type="GO" id="GO:0042025">
    <property type="term" value="C:host cell nucleus"/>
    <property type="evidence" value="ECO:0007669"/>
    <property type="project" value="UniProtKB-SubCell"/>
</dbReference>
<dbReference type="GO" id="GO:0019028">
    <property type="term" value="C:viral capsid"/>
    <property type="evidence" value="ECO:0007669"/>
    <property type="project" value="UniProtKB-KW"/>
</dbReference>
<dbReference type="GO" id="GO:0005198">
    <property type="term" value="F:structural molecule activity"/>
    <property type="evidence" value="ECO:0007669"/>
    <property type="project" value="InterPro"/>
</dbReference>
<dbReference type="HAMAP" id="MF_04019">
    <property type="entry name" value="HSV_TRX2"/>
    <property type="match status" value="1"/>
</dbReference>
<dbReference type="InterPro" id="IPR002690">
    <property type="entry name" value="Herpes_capsid_2"/>
</dbReference>
<dbReference type="Pfam" id="PF01802">
    <property type="entry name" value="Herpes_V23"/>
    <property type="match status" value="1"/>
</dbReference>
<evidence type="ECO:0000255" key="1">
    <source>
        <dbReference type="HAMAP-Rule" id="MF_04019"/>
    </source>
</evidence>
<organism>
    <name type="scientific">Gallid herpesvirus 2 (strain Chicken/Md5/ATCC VR-987)</name>
    <name type="common">GaHV-2</name>
    <name type="synonym">Marek's disease herpesvirus type 1</name>
    <dbReference type="NCBI Taxonomy" id="10389"/>
    <lineage>
        <taxon>Viruses</taxon>
        <taxon>Duplodnaviria</taxon>
        <taxon>Heunggongvirae</taxon>
        <taxon>Peploviricota</taxon>
        <taxon>Herviviricetes</taxon>
        <taxon>Herpesvirales</taxon>
        <taxon>Orthoherpesviridae</taxon>
        <taxon>Alphaherpesvirinae</taxon>
        <taxon>Mardivirus</taxon>
        <taxon>Mardivirus gallidalpha2</taxon>
        <taxon>Gallid alphaherpesvirus 2</taxon>
    </lineage>
</organism>
<reference key="1">
    <citation type="journal article" date="2000" name="J. Virol.">
        <title>The genome of a very virulent Marek's disease virus.</title>
        <authorList>
            <person name="Tulman E.R."/>
            <person name="Afonso C.L."/>
            <person name="Lu Z."/>
            <person name="Zsak L."/>
            <person name="Rock D.L."/>
            <person name="Kutish G.F."/>
        </authorList>
    </citation>
    <scope>NUCLEOTIDE SEQUENCE [LARGE SCALE GENOMIC DNA]</scope>
</reference>
<proteinExistence type="inferred from homology"/>
<name>TRX2_GAHVM</name>
<organismHost>
    <name type="scientific">Gallus gallus</name>
    <name type="common">Chicken</name>
    <dbReference type="NCBI Taxonomy" id="9031"/>
</organismHost>
<feature type="chain" id="PRO_0000406533" description="Triplex capsid protein 2">
    <location>
        <begin position="1"/>
        <end position="319"/>
    </location>
</feature>